<sequence>KEGYLVNSYTGCKFECFKLGDNDYCKRECKQQYGKSSGGYCYAFGCWCTHLYEQAVVWPLPNKTCN</sequence>
<protein>
    <recommendedName>
        <fullName>Beta-toxin Css6</fullName>
    </recommendedName>
    <alternativeName>
        <fullName>Css VI</fullName>
        <shortName>CssVI</shortName>
    </alternativeName>
</protein>
<accession>P60267</accession>
<feature type="chain" id="PRO_0000066779" description="Beta-toxin Css6">
    <location>
        <begin position="1"/>
        <end position="66"/>
    </location>
</feature>
<feature type="domain" description="LCN-type CS-alpha/beta" evidence="2">
    <location>
        <begin position="1"/>
        <end position="66"/>
    </location>
</feature>
<feature type="modified residue" description="Asparagine amide" evidence="1">
    <location>
        <position position="66"/>
    </location>
</feature>
<feature type="disulfide bond" evidence="2">
    <location>
        <begin position="12"/>
        <end position="65"/>
    </location>
</feature>
<feature type="disulfide bond" evidence="2">
    <location>
        <begin position="16"/>
        <end position="41"/>
    </location>
</feature>
<feature type="disulfide bond" evidence="2">
    <location>
        <begin position="25"/>
        <end position="46"/>
    </location>
</feature>
<feature type="disulfide bond" evidence="2">
    <location>
        <begin position="29"/>
        <end position="48"/>
    </location>
</feature>
<dbReference type="SMR" id="P60267"/>
<dbReference type="GO" id="GO:0005576">
    <property type="term" value="C:extracellular region"/>
    <property type="evidence" value="ECO:0007669"/>
    <property type="project" value="UniProtKB-SubCell"/>
</dbReference>
<dbReference type="GO" id="GO:0019871">
    <property type="term" value="F:sodium channel inhibitor activity"/>
    <property type="evidence" value="ECO:0007669"/>
    <property type="project" value="InterPro"/>
</dbReference>
<dbReference type="GO" id="GO:0090729">
    <property type="term" value="F:toxin activity"/>
    <property type="evidence" value="ECO:0007669"/>
    <property type="project" value="UniProtKB-KW"/>
</dbReference>
<dbReference type="GO" id="GO:0006952">
    <property type="term" value="P:defense response"/>
    <property type="evidence" value="ECO:0007669"/>
    <property type="project" value="InterPro"/>
</dbReference>
<dbReference type="CDD" id="cd23106">
    <property type="entry name" value="neurotoxins_LC_scorpion"/>
    <property type="match status" value="1"/>
</dbReference>
<dbReference type="FunFam" id="3.30.30.10:FF:000002">
    <property type="entry name" value="Alpha-like toxin BmK-M1"/>
    <property type="match status" value="1"/>
</dbReference>
<dbReference type="Gene3D" id="3.30.30.10">
    <property type="entry name" value="Knottin, scorpion toxin-like"/>
    <property type="match status" value="1"/>
</dbReference>
<dbReference type="InterPro" id="IPR044062">
    <property type="entry name" value="LCN-type_CS_alpha_beta_dom"/>
</dbReference>
<dbReference type="InterPro" id="IPR003614">
    <property type="entry name" value="Scorpion_toxin-like"/>
</dbReference>
<dbReference type="InterPro" id="IPR036574">
    <property type="entry name" value="Scorpion_toxin-like_sf"/>
</dbReference>
<dbReference type="InterPro" id="IPR018218">
    <property type="entry name" value="Scorpion_toxinL"/>
</dbReference>
<dbReference type="InterPro" id="IPR002061">
    <property type="entry name" value="Scorpion_toxinL/defensin"/>
</dbReference>
<dbReference type="Pfam" id="PF00537">
    <property type="entry name" value="Toxin_3"/>
    <property type="match status" value="1"/>
</dbReference>
<dbReference type="PRINTS" id="PR00285">
    <property type="entry name" value="SCORPNTOXIN"/>
</dbReference>
<dbReference type="SMART" id="SM00505">
    <property type="entry name" value="Knot1"/>
    <property type="match status" value="1"/>
</dbReference>
<dbReference type="SUPFAM" id="SSF57095">
    <property type="entry name" value="Scorpion toxin-like"/>
    <property type="match status" value="1"/>
</dbReference>
<dbReference type="PROSITE" id="PS51863">
    <property type="entry name" value="LCN_CSAB"/>
    <property type="match status" value="1"/>
</dbReference>
<comment type="function">
    <text>Beta toxins bind voltage-independently at site-4 of sodium channels (Nav) and shift the voltage of activation toward more negative potentials thereby affecting sodium channel activation and promoting spontaneous and repetitive firing.</text>
</comment>
<comment type="subcellular location">
    <subcellularLocation>
        <location>Secreted</location>
    </subcellularLocation>
</comment>
<comment type="tissue specificity">
    <text>Expressed by the venom gland.</text>
</comment>
<comment type="domain">
    <text evidence="3">Has the structural arrangement of an alpha-helix connected to antiparallel beta-sheets by disulfide bonds (CS-alpha/beta).</text>
</comment>
<comment type="similarity">
    <text evidence="3">Belongs to the long (4 C-C) scorpion toxin superfamily. Sodium channel inhibitor family. Beta subfamily.</text>
</comment>
<reference key="1">
    <citation type="journal article" date="1999" name="Eur. J. Biochem.">
        <title>Scorpion toxins specific for Na+-channels.</title>
        <authorList>
            <person name="Possani L.D."/>
            <person name="Becerril B."/>
            <person name="Delepierre M."/>
            <person name="Tytgat J."/>
        </authorList>
    </citation>
    <scope>PROTEIN SEQUENCE</scope>
    <scope>REVIEW</scope>
</reference>
<reference key="2">
    <citation type="journal article" date="1987" name="J. Biol. Chem.">
        <title>Purification and chemical and biological characterizations of seven toxins from the Mexican scorpion, Centruroides suffusus suffusus.</title>
        <authorList>
            <person name="Martin M.-F."/>
            <person name="Garcia Y."/>
            <person name="Perez L.G."/>
            <person name="el Ayeb M."/>
            <person name="Kopeyan C."/>
            <person name="Bechis G."/>
            <person name="Jover E."/>
            <person name="Rochat H."/>
        </authorList>
    </citation>
    <scope>CHARACTERIZATION</scope>
    <source>
        <tissue>Venom</tissue>
    </source>
</reference>
<evidence type="ECO:0000250" key="1"/>
<evidence type="ECO:0000255" key="2">
    <source>
        <dbReference type="PROSITE-ProRule" id="PRU01210"/>
    </source>
</evidence>
<evidence type="ECO:0000305" key="3"/>
<name>SCX6_CENSU</name>
<organism>
    <name type="scientific">Centruroides suffusus</name>
    <name type="common">Durango bark scorpion</name>
    <dbReference type="NCBI Taxonomy" id="6880"/>
    <lineage>
        <taxon>Eukaryota</taxon>
        <taxon>Metazoa</taxon>
        <taxon>Ecdysozoa</taxon>
        <taxon>Arthropoda</taxon>
        <taxon>Chelicerata</taxon>
        <taxon>Arachnida</taxon>
        <taxon>Scorpiones</taxon>
        <taxon>Buthida</taxon>
        <taxon>Buthoidea</taxon>
        <taxon>Buthidae</taxon>
        <taxon>Centruroides</taxon>
    </lineage>
</organism>
<proteinExistence type="evidence at protein level"/>
<keyword id="KW-0027">Amidation</keyword>
<keyword id="KW-0903">Direct protein sequencing</keyword>
<keyword id="KW-1015">Disulfide bond</keyword>
<keyword id="KW-0872">Ion channel impairing toxin</keyword>
<keyword id="KW-0528">Neurotoxin</keyword>
<keyword id="KW-0964">Secreted</keyword>
<keyword id="KW-0800">Toxin</keyword>
<keyword id="KW-0738">Voltage-gated sodium channel impairing toxin</keyword>